<protein>
    <recommendedName>
        <fullName evidence="1">Chaperone protein HtpG</fullName>
    </recommendedName>
    <alternativeName>
        <fullName evidence="1">Heat shock protein HtpG</fullName>
    </alternativeName>
    <alternativeName>
        <fullName evidence="1">High temperature protein G</fullName>
    </alternativeName>
</protein>
<gene>
    <name evidence="1" type="primary">htpG</name>
    <name type="ordered locus">FTA_0283</name>
</gene>
<comment type="function">
    <text evidence="1">Molecular chaperone. Has ATPase activity.</text>
</comment>
<comment type="subunit">
    <text evidence="1">Homodimer.</text>
</comment>
<comment type="subcellular location">
    <subcellularLocation>
        <location evidence="1">Cytoplasm</location>
    </subcellularLocation>
</comment>
<comment type="similarity">
    <text evidence="1">Belongs to the heat shock protein 90 family.</text>
</comment>
<organism>
    <name type="scientific">Francisella tularensis subsp. holarctica (strain FTNF002-00 / FTA)</name>
    <dbReference type="NCBI Taxonomy" id="458234"/>
    <lineage>
        <taxon>Bacteria</taxon>
        <taxon>Pseudomonadati</taxon>
        <taxon>Pseudomonadota</taxon>
        <taxon>Gammaproteobacteria</taxon>
        <taxon>Thiotrichales</taxon>
        <taxon>Francisellaceae</taxon>
        <taxon>Francisella</taxon>
    </lineage>
</organism>
<accession>A7N9V7</accession>
<sequence length="628" mass="72372">MSEKKYTFETEVDKLLHLVIHSLYSNREIFLRELVSNSSDAIEKLRYESISNAALNEDDTDYAIRIDFDKDAKTITVSDNGIGMTEEEVIENLGTIAKSGTKKFLESLTGDKSKDNELIGQFGVGFYSSFIVADKVTVRTRKAGQDKSQATKWVSDAQNGFTVEIITKEKRGTEVILHIKKEHLDLLEYHVLKGLVNKYSDCINTPIQMKKVEYDKDGKQTVKDEYETVNNTKAIWLRSKGEVTNEEYQEFYKYISHDFADALMWIHNKVEGNLEYNSLLYIPQNKPFDFWNRDKDYGLSLYVRRVFIMENKELLPPYLRFVKGVIDSADLPLNVSREILQHNKVIDKIKKAITTKILSELKKLASKDKEKYQKFWDSFGQVLKEGVSDDYSNKEKIAGLLRFATTQSGDSKQTVSLADYISRMKESQDTIYYITSDSYKAAANNPQLEAFKKKGIEVILMTDRIDEWMMSTLTEFDDKHMKSIIKGDIDLDKFETPENKEKFEKEAKDFEKVLKEIKEVLKDKVEDVRLSKRLTDSPSCVVVNDYGMSLHMQKMMEEAGQSFMPGMGMKPILELNAEHNLVQKLKNEADTEIFADLSELLLLQAMFVEGAKIEDPMAFVKLVNKYIR</sequence>
<feature type="chain" id="PRO_1000014917" description="Chaperone protein HtpG">
    <location>
        <begin position="1"/>
        <end position="628"/>
    </location>
</feature>
<feature type="region of interest" description="A; substrate-binding" evidence="1">
    <location>
        <begin position="1"/>
        <end position="337"/>
    </location>
</feature>
<feature type="region of interest" description="B" evidence="1">
    <location>
        <begin position="338"/>
        <end position="554"/>
    </location>
</feature>
<feature type="region of interest" description="C" evidence="1">
    <location>
        <begin position="555"/>
        <end position="628"/>
    </location>
</feature>
<keyword id="KW-0067">ATP-binding</keyword>
<keyword id="KW-0143">Chaperone</keyword>
<keyword id="KW-0963">Cytoplasm</keyword>
<keyword id="KW-0547">Nucleotide-binding</keyword>
<keyword id="KW-0346">Stress response</keyword>
<evidence type="ECO:0000255" key="1">
    <source>
        <dbReference type="HAMAP-Rule" id="MF_00505"/>
    </source>
</evidence>
<reference key="1">
    <citation type="journal article" date="2009" name="PLoS ONE">
        <title>Complete genome sequence of Francisella tularensis subspecies holarctica FTNF002-00.</title>
        <authorList>
            <person name="Barabote R.D."/>
            <person name="Xie G."/>
            <person name="Brettin T.S."/>
            <person name="Hinrichs S.H."/>
            <person name="Fey P.D."/>
            <person name="Jay J.J."/>
            <person name="Engle J.L."/>
            <person name="Godbole S.D."/>
            <person name="Noronha J.M."/>
            <person name="Scheuermann R.H."/>
            <person name="Zhou L.W."/>
            <person name="Lion C."/>
            <person name="Dempsey M.P."/>
        </authorList>
    </citation>
    <scope>NUCLEOTIDE SEQUENCE [LARGE SCALE GENOMIC DNA]</scope>
    <source>
        <strain>FTNF002-00 / FTA</strain>
    </source>
</reference>
<dbReference type="EMBL" id="CP000803">
    <property type="protein sequence ID" value="ABU60760.1"/>
    <property type="molecule type" value="Genomic_DNA"/>
</dbReference>
<dbReference type="RefSeq" id="WP_003014393.1">
    <property type="nucleotide sequence ID" value="NC_009749.1"/>
</dbReference>
<dbReference type="SMR" id="A7N9V7"/>
<dbReference type="KEGG" id="fta:FTA_0283"/>
<dbReference type="HOGENOM" id="CLU_006684_3_0_6"/>
<dbReference type="GO" id="GO:0005737">
    <property type="term" value="C:cytoplasm"/>
    <property type="evidence" value="ECO:0007669"/>
    <property type="project" value="UniProtKB-SubCell"/>
</dbReference>
<dbReference type="GO" id="GO:0005524">
    <property type="term" value="F:ATP binding"/>
    <property type="evidence" value="ECO:0007669"/>
    <property type="project" value="UniProtKB-UniRule"/>
</dbReference>
<dbReference type="GO" id="GO:0016887">
    <property type="term" value="F:ATP hydrolysis activity"/>
    <property type="evidence" value="ECO:0007669"/>
    <property type="project" value="InterPro"/>
</dbReference>
<dbReference type="GO" id="GO:0140662">
    <property type="term" value="F:ATP-dependent protein folding chaperone"/>
    <property type="evidence" value="ECO:0007669"/>
    <property type="project" value="InterPro"/>
</dbReference>
<dbReference type="GO" id="GO:0051082">
    <property type="term" value="F:unfolded protein binding"/>
    <property type="evidence" value="ECO:0007669"/>
    <property type="project" value="UniProtKB-UniRule"/>
</dbReference>
<dbReference type="CDD" id="cd16927">
    <property type="entry name" value="HATPase_Hsp90-like"/>
    <property type="match status" value="1"/>
</dbReference>
<dbReference type="FunFam" id="3.30.230.80:FF:000002">
    <property type="entry name" value="Molecular chaperone HtpG"/>
    <property type="match status" value="1"/>
</dbReference>
<dbReference type="FunFam" id="3.30.565.10:FF:000009">
    <property type="entry name" value="Molecular chaperone HtpG"/>
    <property type="match status" value="1"/>
</dbReference>
<dbReference type="Gene3D" id="3.30.230.80">
    <property type="match status" value="1"/>
</dbReference>
<dbReference type="Gene3D" id="3.40.50.11260">
    <property type="match status" value="1"/>
</dbReference>
<dbReference type="Gene3D" id="1.20.120.790">
    <property type="entry name" value="Heat shock protein 90, C-terminal domain"/>
    <property type="match status" value="1"/>
</dbReference>
<dbReference type="Gene3D" id="3.30.565.10">
    <property type="entry name" value="Histidine kinase-like ATPase, C-terminal domain"/>
    <property type="match status" value="1"/>
</dbReference>
<dbReference type="HAMAP" id="MF_00505">
    <property type="entry name" value="HSP90"/>
    <property type="match status" value="1"/>
</dbReference>
<dbReference type="InterPro" id="IPR036890">
    <property type="entry name" value="HATPase_C_sf"/>
</dbReference>
<dbReference type="InterPro" id="IPR019805">
    <property type="entry name" value="Heat_shock_protein_90_CS"/>
</dbReference>
<dbReference type="InterPro" id="IPR037196">
    <property type="entry name" value="HSP90_C"/>
</dbReference>
<dbReference type="InterPro" id="IPR001404">
    <property type="entry name" value="Hsp90_fam"/>
</dbReference>
<dbReference type="InterPro" id="IPR020575">
    <property type="entry name" value="Hsp90_N"/>
</dbReference>
<dbReference type="InterPro" id="IPR020568">
    <property type="entry name" value="Ribosomal_Su5_D2-typ_SF"/>
</dbReference>
<dbReference type="NCBIfam" id="NF003555">
    <property type="entry name" value="PRK05218.1"/>
    <property type="match status" value="1"/>
</dbReference>
<dbReference type="PANTHER" id="PTHR11528">
    <property type="entry name" value="HEAT SHOCK PROTEIN 90 FAMILY MEMBER"/>
    <property type="match status" value="1"/>
</dbReference>
<dbReference type="Pfam" id="PF13589">
    <property type="entry name" value="HATPase_c_3"/>
    <property type="match status" value="1"/>
</dbReference>
<dbReference type="Pfam" id="PF00183">
    <property type="entry name" value="HSP90"/>
    <property type="match status" value="1"/>
</dbReference>
<dbReference type="PIRSF" id="PIRSF002583">
    <property type="entry name" value="Hsp90"/>
    <property type="match status" value="1"/>
</dbReference>
<dbReference type="PRINTS" id="PR00775">
    <property type="entry name" value="HEATSHOCK90"/>
</dbReference>
<dbReference type="SMART" id="SM00387">
    <property type="entry name" value="HATPase_c"/>
    <property type="match status" value="1"/>
</dbReference>
<dbReference type="SUPFAM" id="SSF55874">
    <property type="entry name" value="ATPase domain of HSP90 chaperone/DNA topoisomerase II/histidine kinase"/>
    <property type="match status" value="1"/>
</dbReference>
<dbReference type="SUPFAM" id="SSF110942">
    <property type="entry name" value="HSP90 C-terminal domain"/>
    <property type="match status" value="1"/>
</dbReference>
<dbReference type="SUPFAM" id="SSF54211">
    <property type="entry name" value="Ribosomal protein S5 domain 2-like"/>
    <property type="match status" value="1"/>
</dbReference>
<dbReference type="PROSITE" id="PS00298">
    <property type="entry name" value="HSP90"/>
    <property type="match status" value="1"/>
</dbReference>
<name>HTPG_FRATF</name>
<proteinExistence type="inferred from homology"/>